<protein>
    <recommendedName>
        <fullName>Homeotic protein ultrabithorax</fullName>
    </recommendedName>
</protein>
<organism>
    <name type="scientific">Musca domestica</name>
    <name type="common">House fly</name>
    <dbReference type="NCBI Taxonomy" id="7370"/>
    <lineage>
        <taxon>Eukaryota</taxon>
        <taxon>Metazoa</taxon>
        <taxon>Ecdysozoa</taxon>
        <taxon>Arthropoda</taxon>
        <taxon>Hexapoda</taxon>
        <taxon>Insecta</taxon>
        <taxon>Pterygota</taxon>
        <taxon>Neoptera</taxon>
        <taxon>Endopterygota</taxon>
        <taxon>Diptera</taxon>
        <taxon>Brachycera</taxon>
        <taxon>Muscomorpha</taxon>
        <taxon>Muscoidea</taxon>
        <taxon>Muscidae</taxon>
        <taxon>Musca</taxon>
    </lineage>
</organism>
<proteinExistence type="inferred from homology"/>
<reference key="1">
    <citation type="journal article" date="1987" name="EMBO J.">
        <title>Conserved sequence elements in the 5' region of the Ultrabithorax transcription unit.</title>
        <authorList>
            <person name="Wilde C.D."/>
            <person name="Akam M."/>
        </authorList>
    </citation>
    <scope>NUCLEOTIDE SEQUENCE [GENOMIC DNA]</scope>
</reference>
<evidence type="ECO:0000250" key="1"/>
<evidence type="ECO:0000256" key="2">
    <source>
        <dbReference type="SAM" id="MobiDB-lite"/>
    </source>
</evidence>
<evidence type="ECO:0000305" key="3"/>
<dbReference type="EMBL" id="X05178">
    <property type="protein sequence ID" value="CAA28813.1"/>
    <property type="molecule type" value="Genomic_DNA"/>
</dbReference>
<dbReference type="STRING" id="7370.Q25451"/>
<dbReference type="VEuPathDB" id="VectorBase:MDOA009747"/>
<dbReference type="VEuPathDB" id="VectorBase:MDOMA2_003297"/>
<dbReference type="eggNOG" id="KOG0489">
    <property type="taxonomic scope" value="Eukaryota"/>
</dbReference>
<dbReference type="Proteomes" id="UP000694905">
    <property type="component" value="Unplaced"/>
</dbReference>
<dbReference type="GO" id="GO:0005634">
    <property type="term" value="C:nucleus"/>
    <property type="evidence" value="ECO:0007669"/>
    <property type="project" value="UniProtKB-SubCell"/>
</dbReference>
<dbReference type="GO" id="GO:0003677">
    <property type="term" value="F:DNA binding"/>
    <property type="evidence" value="ECO:0007669"/>
    <property type="project" value="UniProtKB-KW"/>
</dbReference>
<dbReference type="PROSITE" id="PS00032">
    <property type="entry name" value="ANTENNAPEDIA"/>
    <property type="match status" value="1"/>
</dbReference>
<gene>
    <name type="primary">Ubx</name>
</gene>
<sequence length="248" mass="23912">NSYFEQASGFYGHPHQATGMSMGTAGHHDQSATAAAAAYRGFPLSLGMTPYTNHHLQRSTQDSPYDASITAACNKIYGDGNAYKQDCLNIKSDTINGYKDIWNTTANGGGAGGGGGTGGGGGGSAGSANGANNTANGQNTSGGGGAGGGGGMPVRPSACTPDSRVGGYLDTSGGSPVSHRGGSAGVVGGAGTGVGQSGQSANVGGAGGVGGATAWNANCTISGAAAAQTASSLHQASNHTFYPWMAIA</sequence>
<comment type="function">
    <text evidence="1">Sequence-specific transcription factor which is part of a developmental regulatory system that provides cells with specific positional identities on the anterior-posterior axis. Binds the consensus region 5'-TTAAT[GT][GA]-3' (By similarity).</text>
</comment>
<comment type="subcellular location">
    <subcellularLocation>
        <location>Nucleus</location>
    </subcellularLocation>
</comment>
<comment type="similarity">
    <text evidence="3">Belongs to the Antp homeobox family.</text>
</comment>
<feature type="chain" id="PRO_0000200273" description="Homeotic protein ultrabithorax">
    <location>
        <begin position="1" status="less than"/>
        <end position="248"/>
    </location>
</feature>
<feature type="region of interest" description="Disordered" evidence="2">
    <location>
        <begin position="116"/>
        <end position="191"/>
    </location>
</feature>
<feature type="short sequence motif" description="Antp-type hexapeptide">
    <location>
        <begin position="241"/>
        <end position="246"/>
    </location>
</feature>
<feature type="compositionally biased region" description="Gly residues" evidence="2">
    <location>
        <begin position="116"/>
        <end position="125"/>
    </location>
</feature>
<feature type="compositionally biased region" description="Low complexity" evidence="2">
    <location>
        <begin position="126"/>
        <end position="139"/>
    </location>
</feature>
<feature type="compositionally biased region" description="Gly residues" evidence="2">
    <location>
        <begin position="140"/>
        <end position="152"/>
    </location>
</feature>
<feature type="compositionally biased region" description="Gly residues" evidence="2">
    <location>
        <begin position="182"/>
        <end position="191"/>
    </location>
</feature>
<feature type="non-terminal residue">
    <location>
        <position position="1"/>
    </location>
</feature>
<accession>Q25451</accession>
<name>UBX_MUSDO</name>
<keyword id="KW-0010">Activator</keyword>
<keyword id="KW-0217">Developmental protein</keyword>
<keyword id="KW-0238">DNA-binding</keyword>
<keyword id="KW-0371">Homeobox</keyword>
<keyword id="KW-0539">Nucleus</keyword>
<keyword id="KW-1185">Reference proteome</keyword>
<keyword id="KW-0678">Repressor</keyword>
<keyword id="KW-0804">Transcription</keyword>
<keyword id="KW-0805">Transcription regulation</keyword>